<accession>A7ZL06</accession>
<reference key="1">
    <citation type="journal article" date="2008" name="J. Bacteriol.">
        <title>The pangenome structure of Escherichia coli: comparative genomic analysis of E. coli commensal and pathogenic isolates.</title>
        <authorList>
            <person name="Rasko D.A."/>
            <person name="Rosovitz M.J."/>
            <person name="Myers G.S.A."/>
            <person name="Mongodin E.F."/>
            <person name="Fricke W.F."/>
            <person name="Gajer P."/>
            <person name="Crabtree J."/>
            <person name="Sebaihia M."/>
            <person name="Thomson N.R."/>
            <person name="Chaudhuri R."/>
            <person name="Henderson I.R."/>
            <person name="Sperandio V."/>
            <person name="Ravel J."/>
        </authorList>
    </citation>
    <scope>NUCLEOTIDE SEQUENCE [LARGE SCALE GENOMIC DNA]</scope>
    <source>
        <strain>E24377A / ETEC</strain>
    </source>
</reference>
<name>YCHJ_ECO24</name>
<evidence type="ECO:0000255" key="1">
    <source>
        <dbReference type="HAMAP-Rule" id="MF_00612"/>
    </source>
</evidence>
<proteinExistence type="inferred from homology"/>
<dbReference type="EMBL" id="CP000800">
    <property type="protein sequence ID" value="ABV17403.1"/>
    <property type="molecule type" value="Genomic_DNA"/>
</dbReference>
<dbReference type="RefSeq" id="WP_001362540.1">
    <property type="nucleotide sequence ID" value="NC_009801.1"/>
</dbReference>
<dbReference type="SMR" id="A7ZL06"/>
<dbReference type="KEGG" id="ecw:EcE24377A_1382"/>
<dbReference type="HOGENOM" id="CLU_099590_0_0_6"/>
<dbReference type="Proteomes" id="UP000001122">
    <property type="component" value="Chromosome"/>
</dbReference>
<dbReference type="Gene3D" id="3.10.450.50">
    <property type="match status" value="1"/>
</dbReference>
<dbReference type="HAMAP" id="MF_00612">
    <property type="entry name" value="UPF0225"/>
    <property type="match status" value="1"/>
</dbReference>
<dbReference type="InterPro" id="IPR032710">
    <property type="entry name" value="NTF2-like_dom_sf"/>
</dbReference>
<dbReference type="InterPro" id="IPR004027">
    <property type="entry name" value="SEC_C_motif"/>
</dbReference>
<dbReference type="InterPro" id="IPR023006">
    <property type="entry name" value="UPF0225"/>
</dbReference>
<dbReference type="InterPro" id="IPR048469">
    <property type="entry name" value="YchJ-like_M"/>
</dbReference>
<dbReference type="NCBIfam" id="NF002449">
    <property type="entry name" value="PRK01617.1"/>
    <property type="match status" value="1"/>
</dbReference>
<dbReference type="NCBIfam" id="NF002486">
    <property type="entry name" value="PRK01752.1"/>
    <property type="match status" value="1"/>
</dbReference>
<dbReference type="PANTHER" id="PTHR33747:SF1">
    <property type="entry name" value="ADENYLATE CYCLASE-ASSOCIATED CAP C-TERMINAL DOMAIN-CONTAINING PROTEIN"/>
    <property type="match status" value="1"/>
</dbReference>
<dbReference type="PANTHER" id="PTHR33747">
    <property type="entry name" value="UPF0225 PROTEIN SCO1677"/>
    <property type="match status" value="1"/>
</dbReference>
<dbReference type="Pfam" id="PF02810">
    <property type="entry name" value="SEC-C"/>
    <property type="match status" value="2"/>
</dbReference>
<dbReference type="Pfam" id="PF17775">
    <property type="entry name" value="YchJ_M-like"/>
    <property type="match status" value="1"/>
</dbReference>
<dbReference type="SUPFAM" id="SSF54427">
    <property type="entry name" value="NTF2-like"/>
    <property type="match status" value="1"/>
</dbReference>
<dbReference type="SUPFAM" id="SSF103642">
    <property type="entry name" value="Sec-C motif"/>
    <property type="match status" value="1"/>
</dbReference>
<feature type="chain" id="PRO_1000061296" description="UPF0225 protein YchJ">
    <location>
        <begin position="1"/>
        <end position="152"/>
    </location>
</feature>
<comment type="similarity">
    <text evidence="1">Belongs to the UPF0225 family.</text>
</comment>
<organism>
    <name type="scientific">Escherichia coli O139:H28 (strain E24377A / ETEC)</name>
    <dbReference type="NCBI Taxonomy" id="331111"/>
    <lineage>
        <taxon>Bacteria</taxon>
        <taxon>Pseudomonadati</taxon>
        <taxon>Pseudomonadota</taxon>
        <taxon>Gammaproteobacteria</taxon>
        <taxon>Enterobacterales</taxon>
        <taxon>Enterobacteriaceae</taxon>
        <taxon>Escherichia</taxon>
    </lineage>
</organism>
<gene>
    <name evidence="1" type="primary">ychJ</name>
    <name type="ordered locus">EcE24377A_1382</name>
</gene>
<keyword id="KW-1185">Reference proteome</keyword>
<sequence length="152" mass="16972">MSQLCPCGSAVEYSLCCHPYVSGEKVAPDPEHLMRSRYCAFVMQDADYLIKTWHPSCGAAALRAELIAGFAHTEWLGLTVFEHCWQDADNIGFVSFVARFTEGGKTGAIIERSRFLKENGQWYYIDGTRPQFGRNDPCPCGSGKKFKKCCGQ</sequence>
<protein>
    <recommendedName>
        <fullName evidence="1">UPF0225 protein YchJ</fullName>
    </recommendedName>
</protein>